<protein>
    <recommendedName>
        <fullName>Postacrosomal sheath WW domain-binding protein</fullName>
    </recommendedName>
    <alternativeName>
        <fullName>WW domain-binding protein 2-like</fullName>
    </alternativeName>
</protein>
<accession>Q4R3M1</accession>
<proteinExistence type="evidence at transcript level"/>
<comment type="function">
    <text evidence="1">May play a role in meiotic resumption and pronuclear formation, mediated by a WW domain-signaling pathway during fertilization.</text>
</comment>
<evidence type="ECO:0000250" key="1"/>
<evidence type="ECO:0000256" key="2">
    <source>
        <dbReference type="SAM" id="MobiDB-lite"/>
    </source>
</evidence>
<name>WBP2L_MACFA</name>
<keyword id="KW-1185">Reference proteome</keyword>
<keyword id="KW-0677">Repeat</keyword>
<reference key="1">
    <citation type="submission" date="2005-06" db="EMBL/GenBank/DDBJ databases">
        <title>DNA sequences of macaque genes expressed in brain or testis and its evolutionary implications.</title>
        <authorList>
            <consortium name="International consortium for macaque cDNA sequencing and analysis"/>
        </authorList>
    </citation>
    <scope>NUCLEOTIDE SEQUENCE [LARGE SCALE MRNA]</scope>
    <source>
        <tissue>Testis</tissue>
    </source>
</reference>
<dbReference type="EMBL" id="AB179245">
    <property type="protein sequence ID" value="BAE02296.1"/>
    <property type="molecule type" value="mRNA"/>
</dbReference>
<dbReference type="SMR" id="Q4R3M1"/>
<dbReference type="STRING" id="9541.ENSMFAP00000036634"/>
<dbReference type="Proteomes" id="UP000233100">
    <property type="component" value="Unplaced"/>
</dbReference>
<dbReference type="GO" id="GO:0005634">
    <property type="term" value="C:nucleus"/>
    <property type="evidence" value="ECO:0007669"/>
    <property type="project" value="TreeGrafter"/>
</dbReference>
<dbReference type="GO" id="GO:0031490">
    <property type="term" value="F:chromatin DNA binding"/>
    <property type="evidence" value="ECO:0007669"/>
    <property type="project" value="TreeGrafter"/>
</dbReference>
<dbReference type="GO" id="GO:0003713">
    <property type="term" value="F:transcription coactivator activity"/>
    <property type="evidence" value="ECO:0007669"/>
    <property type="project" value="InterPro"/>
</dbReference>
<dbReference type="CDD" id="cd13214">
    <property type="entry name" value="PH-GRAM_WBP2"/>
    <property type="match status" value="1"/>
</dbReference>
<dbReference type="Gene3D" id="2.30.29.30">
    <property type="entry name" value="Pleckstrin-homology domain (PH domain)/Phosphotyrosine-binding domain (PTB)"/>
    <property type="match status" value="1"/>
</dbReference>
<dbReference type="InterPro" id="IPR004182">
    <property type="entry name" value="GRAM"/>
</dbReference>
<dbReference type="InterPro" id="IPR011993">
    <property type="entry name" value="PH-like_dom_sf"/>
</dbReference>
<dbReference type="InterPro" id="IPR044852">
    <property type="entry name" value="WBP2-like"/>
</dbReference>
<dbReference type="PANTHER" id="PTHR31606:SF2">
    <property type="entry name" value="POSTACROSOMAL SHEATH WW DOMAIN-BINDING PROTEIN"/>
    <property type="match status" value="1"/>
</dbReference>
<dbReference type="PANTHER" id="PTHR31606">
    <property type="entry name" value="WW DOMAIN BINDING PROTEIN 2, ISOFORM E"/>
    <property type="match status" value="1"/>
</dbReference>
<dbReference type="Pfam" id="PF02893">
    <property type="entry name" value="GRAM"/>
    <property type="match status" value="1"/>
</dbReference>
<dbReference type="SUPFAM" id="SSF50729">
    <property type="entry name" value="PH domain-like"/>
    <property type="match status" value="1"/>
</dbReference>
<feature type="chain" id="PRO_0000289129" description="Postacrosomal sheath WW domain-binding protein">
    <location>
        <begin position="1"/>
        <end position="255"/>
    </location>
</feature>
<feature type="domain" description="GRAM">
    <location>
        <begin position="15"/>
        <end position="87"/>
    </location>
</feature>
<feature type="repeat" description="1">
    <location>
        <begin position="139"/>
        <end position="145"/>
    </location>
</feature>
<feature type="repeat" description="2">
    <location>
        <begin position="146"/>
        <end position="152"/>
    </location>
</feature>
<feature type="repeat" description="3">
    <location>
        <begin position="153"/>
        <end position="159"/>
    </location>
</feature>
<feature type="repeat" description="3">
    <location>
        <begin position="160"/>
        <end position="166"/>
    </location>
</feature>
<feature type="repeat" description="4">
    <location>
        <begin position="167"/>
        <end position="173"/>
    </location>
</feature>
<feature type="repeat" description="5">
    <location>
        <begin position="174"/>
        <end position="180"/>
    </location>
</feature>
<feature type="repeat" description="6">
    <location>
        <begin position="202"/>
        <end position="208"/>
    </location>
</feature>
<feature type="region of interest" description="6 X 7 AA tandem repeat of Y-G-X-P-P-X-G">
    <location>
        <begin position="139"/>
        <end position="208"/>
    </location>
</feature>
<feature type="region of interest" description="Disordered" evidence="2">
    <location>
        <begin position="180"/>
        <end position="199"/>
    </location>
</feature>
<feature type="region of interest" description="Disordered" evidence="2">
    <location>
        <begin position="204"/>
        <end position="255"/>
    </location>
</feature>
<feature type="short sequence motif" description="PPxY motif">
    <location>
        <begin position="171"/>
        <end position="174"/>
    </location>
</feature>
<gene>
    <name type="primary">WBP2NL</name>
    <name type="synonym">PAWP</name>
    <name type="ORF">QtsA-15969</name>
</gene>
<sequence>MAVNQSHTENRRGVLIPNGESLLKQSLNVELSFPRQSEGSNVFNGTKTGTLFLTSYRVIFITSHSINGPMLSFMMPFDLITNLTVEQPVFAANFIKGTIQAAPYGGWEGQATFKLVFRNGGAIEFAQLMVKAASSVIAYGAPPAGYGAPPAGYGAPPPGYGAPPAGYGAPPPGYGAPPAGYGAQPAGNEGPPVGYRASPAGYGAPPLGYEAPPAGNEGLPAGYRASPAGSGARPHESAAAQAPENEASLPSASSS</sequence>
<organism>
    <name type="scientific">Macaca fascicularis</name>
    <name type="common">Crab-eating macaque</name>
    <name type="synonym">Cynomolgus monkey</name>
    <dbReference type="NCBI Taxonomy" id="9541"/>
    <lineage>
        <taxon>Eukaryota</taxon>
        <taxon>Metazoa</taxon>
        <taxon>Chordata</taxon>
        <taxon>Craniata</taxon>
        <taxon>Vertebrata</taxon>
        <taxon>Euteleostomi</taxon>
        <taxon>Mammalia</taxon>
        <taxon>Eutheria</taxon>
        <taxon>Euarchontoglires</taxon>
        <taxon>Primates</taxon>
        <taxon>Haplorrhini</taxon>
        <taxon>Catarrhini</taxon>
        <taxon>Cercopithecidae</taxon>
        <taxon>Cercopithecinae</taxon>
        <taxon>Macaca</taxon>
    </lineage>
</organism>